<dbReference type="EC" id="2.7.7.6" evidence="1"/>
<dbReference type="EMBL" id="AB189069">
    <property type="protein sequence ID" value="BAD93457.1"/>
    <property type="molecule type" value="Genomic_DNA"/>
</dbReference>
<dbReference type="SMR" id="Q589C0"/>
<dbReference type="GO" id="GO:0009507">
    <property type="term" value="C:chloroplast"/>
    <property type="evidence" value="ECO:0007669"/>
    <property type="project" value="UniProtKB-SubCell"/>
</dbReference>
<dbReference type="GO" id="GO:0000428">
    <property type="term" value="C:DNA-directed RNA polymerase complex"/>
    <property type="evidence" value="ECO:0007669"/>
    <property type="project" value="UniProtKB-KW"/>
</dbReference>
<dbReference type="GO" id="GO:0005739">
    <property type="term" value="C:mitochondrion"/>
    <property type="evidence" value="ECO:0007669"/>
    <property type="project" value="GOC"/>
</dbReference>
<dbReference type="GO" id="GO:0003677">
    <property type="term" value="F:DNA binding"/>
    <property type="evidence" value="ECO:0007669"/>
    <property type="project" value="UniProtKB-UniRule"/>
</dbReference>
<dbReference type="GO" id="GO:0003899">
    <property type="term" value="F:DNA-directed RNA polymerase activity"/>
    <property type="evidence" value="ECO:0007669"/>
    <property type="project" value="UniProtKB-UniRule"/>
</dbReference>
<dbReference type="GO" id="GO:0032549">
    <property type="term" value="F:ribonucleoside binding"/>
    <property type="evidence" value="ECO:0007669"/>
    <property type="project" value="InterPro"/>
</dbReference>
<dbReference type="GO" id="GO:0006351">
    <property type="term" value="P:DNA-templated transcription"/>
    <property type="evidence" value="ECO:0007669"/>
    <property type="project" value="UniProtKB-UniRule"/>
</dbReference>
<dbReference type="CDD" id="cd00653">
    <property type="entry name" value="RNA_pol_B_RPB2"/>
    <property type="match status" value="1"/>
</dbReference>
<dbReference type="FunFam" id="3.90.1110.10:FF:000009">
    <property type="entry name" value="DNA-directed RNA polymerase subunit beta"/>
    <property type="match status" value="1"/>
</dbReference>
<dbReference type="Gene3D" id="2.40.50.100">
    <property type="match status" value="1"/>
</dbReference>
<dbReference type="Gene3D" id="2.40.50.150">
    <property type="match status" value="1"/>
</dbReference>
<dbReference type="Gene3D" id="3.90.1100.10">
    <property type="match status" value="1"/>
</dbReference>
<dbReference type="Gene3D" id="2.30.150.10">
    <property type="entry name" value="DNA-directed RNA polymerase, beta subunit, external 1 domain"/>
    <property type="match status" value="1"/>
</dbReference>
<dbReference type="Gene3D" id="2.40.270.10">
    <property type="entry name" value="DNA-directed RNA polymerase, subunit 2, domain 6"/>
    <property type="match status" value="2"/>
</dbReference>
<dbReference type="Gene3D" id="3.90.1800.10">
    <property type="entry name" value="RNA polymerase alpha subunit dimerisation domain"/>
    <property type="match status" value="1"/>
</dbReference>
<dbReference type="Gene3D" id="3.90.1110.10">
    <property type="entry name" value="RNA polymerase Rpb2, domain 2"/>
    <property type="match status" value="1"/>
</dbReference>
<dbReference type="HAMAP" id="MF_01321">
    <property type="entry name" value="RNApol_bact_RpoB"/>
    <property type="match status" value="1"/>
</dbReference>
<dbReference type="InterPro" id="IPR042107">
    <property type="entry name" value="DNA-dir_RNA_pol_bsu_ext_1_sf"/>
</dbReference>
<dbReference type="InterPro" id="IPR015712">
    <property type="entry name" value="DNA-dir_RNA_pol_su2"/>
</dbReference>
<dbReference type="InterPro" id="IPR007120">
    <property type="entry name" value="DNA-dir_RNAP_su2_dom"/>
</dbReference>
<dbReference type="InterPro" id="IPR037033">
    <property type="entry name" value="DNA-dir_RNAP_su2_hyb_sf"/>
</dbReference>
<dbReference type="InterPro" id="IPR010243">
    <property type="entry name" value="RNA_pol_bsu_bac"/>
</dbReference>
<dbReference type="InterPro" id="IPR007121">
    <property type="entry name" value="RNA_pol_bsu_CS"/>
</dbReference>
<dbReference type="InterPro" id="IPR007644">
    <property type="entry name" value="RNA_pol_bsu_protrusion"/>
</dbReference>
<dbReference type="InterPro" id="IPR007642">
    <property type="entry name" value="RNA_pol_Rpb2_2"/>
</dbReference>
<dbReference type="InterPro" id="IPR037034">
    <property type="entry name" value="RNA_pol_Rpb2_2_sf"/>
</dbReference>
<dbReference type="InterPro" id="IPR007645">
    <property type="entry name" value="RNA_pol_Rpb2_3"/>
</dbReference>
<dbReference type="InterPro" id="IPR007641">
    <property type="entry name" value="RNA_pol_Rpb2_7"/>
</dbReference>
<dbReference type="InterPro" id="IPR014724">
    <property type="entry name" value="RNA_pol_RPB2_OB-fold"/>
</dbReference>
<dbReference type="NCBIfam" id="NF001616">
    <property type="entry name" value="PRK00405.1"/>
    <property type="match status" value="1"/>
</dbReference>
<dbReference type="PANTHER" id="PTHR20856">
    <property type="entry name" value="DNA-DIRECTED RNA POLYMERASE I SUBUNIT 2"/>
    <property type="match status" value="1"/>
</dbReference>
<dbReference type="Pfam" id="PF04563">
    <property type="entry name" value="RNA_pol_Rpb2_1"/>
    <property type="match status" value="1"/>
</dbReference>
<dbReference type="Pfam" id="PF04561">
    <property type="entry name" value="RNA_pol_Rpb2_2"/>
    <property type="match status" value="1"/>
</dbReference>
<dbReference type="Pfam" id="PF04565">
    <property type="entry name" value="RNA_pol_Rpb2_3"/>
    <property type="match status" value="1"/>
</dbReference>
<dbReference type="Pfam" id="PF00562">
    <property type="entry name" value="RNA_pol_Rpb2_6"/>
    <property type="match status" value="1"/>
</dbReference>
<dbReference type="Pfam" id="PF04560">
    <property type="entry name" value="RNA_pol_Rpb2_7"/>
    <property type="match status" value="1"/>
</dbReference>
<dbReference type="SUPFAM" id="SSF64484">
    <property type="entry name" value="beta and beta-prime subunits of DNA dependent RNA-polymerase"/>
    <property type="match status" value="1"/>
</dbReference>
<dbReference type="PROSITE" id="PS01166">
    <property type="entry name" value="RNA_POL_BETA"/>
    <property type="match status" value="1"/>
</dbReference>
<keyword id="KW-0150">Chloroplast</keyword>
<keyword id="KW-0240">DNA-directed RNA polymerase</keyword>
<keyword id="KW-0548">Nucleotidyltransferase</keyword>
<keyword id="KW-0934">Plastid</keyword>
<keyword id="KW-0804">Transcription</keyword>
<keyword id="KW-0808">Transferase</keyword>
<accession>Q589C0</accession>
<organism>
    <name type="scientific">Silene latifolia</name>
    <name type="common">White campion</name>
    <name type="synonym">Bladder campion</name>
    <dbReference type="NCBI Taxonomy" id="37657"/>
    <lineage>
        <taxon>Eukaryota</taxon>
        <taxon>Viridiplantae</taxon>
        <taxon>Streptophyta</taxon>
        <taxon>Embryophyta</taxon>
        <taxon>Tracheophyta</taxon>
        <taxon>Spermatophyta</taxon>
        <taxon>Magnoliopsida</taxon>
        <taxon>eudicotyledons</taxon>
        <taxon>Gunneridae</taxon>
        <taxon>Pentapetalae</taxon>
        <taxon>Caryophyllales</taxon>
        <taxon>Caryophyllaceae</taxon>
        <taxon>Sileneae</taxon>
        <taxon>Silene</taxon>
        <taxon>Silene subgen. Behenantha</taxon>
        <taxon>Silene sect. Melandrium</taxon>
    </lineage>
</organism>
<name>RPOB_SILLA</name>
<comment type="function">
    <text evidence="1">DNA-dependent RNA polymerase catalyzes the transcription of DNA into RNA using the four ribonucleoside triphosphates as substrates.</text>
</comment>
<comment type="catalytic activity">
    <reaction evidence="1">
        <text>RNA(n) + a ribonucleoside 5'-triphosphate = RNA(n+1) + diphosphate</text>
        <dbReference type="Rhea" id="RHEA:21248"/>
        <dbReference type="Rhea" id="RHEA-COMP:14527"/>
        <dbReference type="Rhea" id="RHEA-COMP:17342"/>
        <dbReference type="ChEBI" id="CHEBI:33019"/>
        <dbReference type="ChEBI" id="CHEBI:61557"/>
        <dbReference type="ChEBI" id="CHEBI:140395"/>
        <dbReference type="EC" id="2.7.7.6"/>
    </reaction>
</comment>
<comment type="subunit">
    <text evidence="1">In plastids the minimal PEP RNA polymerase catalytic core is composed of four subunits: alpha, beta, beta', and beta''. When a (nuclear-encoded) sigma factor is associated with the core the holoenzyme is formed, which can initiate transcription.</text>
</comment>
<comment type="subcellular location">
    <subcellularLocation>
        <location>Plastid</location>
        <location>Chloroplast</location>
    </subcellularLocation>
</comment>
<comment type="similarity">
    <text evidence="1">Belongs to the RNA polymerase beta chain family.</text>
</comment>
<geneLocation type="chloroplast"/>
<evidence type="ECO:0000255" key="1">
    <source>
        <dbReference type="HAMAP-Rule" id="MF_01321"/>
    </source>
</evidence>
<proteinExistence type="inferred from homology"/>
<gene>
    <name evidence="1" type="primary">rpoB</name>
</gene>
<sequence length="1070" mass="120652">MLREGNELMSTIPGFNQIQFEGFCQFIDQGLPEELYKFPKIEDTDQEIEFQLFVETYQLVEPVIKEKDAVYKSLTYSSELYVSAGLIWKTGREIQEQTILIGNIPLMNSLGTFLVNGIYRIVINQILQSPGIYYRSELDHNGISVYTGTIISDWGGRSELEIDRKARIWARVSRKQKISILVLSSAMGSNLKEILDNVCYPEIFLSFLNDKDKKNFGSKENAILEFYQQFACVGGDPVFSESLCKELQKKFFQQKCELGRIGRRNMNRRLNLDIPQNNTFLLPRDILAATDHLIGMKFGMGTLDDMNHLKNKRIRSVADLLQDQFGLALVRLENVVRGTICGAIRHKLIPTPQNLVTSTPLTTTYESFFGLHPLSQVLDRTNPLTQIVHGRKLSYLGPGGLTGRTASFRIRDIHPSHYGRICPIDTSEGINVGLIGSLAIHARIGLLGSLESPFYKISERSAMVQMLFLSPSIDEYYMVSTGNSLALNQGIQEEQVVPARYRQEFLTIAWEQVHLRSIFPFQYFSIGASLIPFIEHNDANRALMSSNMQRQAVPLSQSEKCIVGTGLERQAALDSGILAIAEHEGKILYTDTDKIIFSGNGDIQSIPLVMYQRSNKNTCMHQNPRIPRGKCIKKGQILADGAATVGGELALGKNILVAYMPWEGYNFEDAVLISERLVYEDIYTSFHIRKYDIQTYVTSQGPERVTSEIPHLEAHLLRNLDKNGIVRLGSWVETGDILVGKLTPQMAKESSYAPEDRLLRAILGIQVSTSKETCLKLPIGGRGRVIDVRWIQKKGGSSYNPETIHVYILQKREIKVGDKVAGRHGNKGIISKILPRQDMPYLQDGRPVDMVFNPLGVPSRMNVGQIFECSLGLAGGLLDRHYRIAPFDERYEQEASRKLVFSELYQASKQTSEPWIFEPEYPGKSRIFDGRTGDLFEQPVIIGNPYILKLIHQVDDKIHGRSSGHYALVTQQPLRGRAKQGGQRVGEMEVWALEGFGVAHILQEMLTYKSDHIKARQDVLGTTIIGGTIPNPEDAPESFRLLIRELRSLALELNHFLVSEKTFQINRMEA</sequence>
<feature type="chain" id="PRO_0000048047" description="DNA-directed RNA polymerase subunit beta">
    <location>
        <begin position="1"/>
        <end position="1070"/>
    </location>
</feature>
<reference key="1">
    <citation type="submission" date="2004-08" db="EMBL/GenBank/DDBJ databases">
        <title>A partial chloroplast genome of Silene latifolia.</title>
        <authorList>
            <person name="Kejnovsky E."/>
            <person name="Kubat Z."/>
            <person name="Hobza R."/>
            <person name="Lengerova M."/>
            <person name="Sato S."/>
            <person name="Tabata S."/>
            <person name="Fukui K."/>
            <person name="Matsunaga S."/>
            <person name="Vyskot B."/>
        </authorList>
    </citation>
    <scope>NUCLEOTIDE SEQUENCE [GENOMIC DNA]</scope>
</reference>
<protein>
    <recommendedName>
        <fullName evidence="1">DNA-directed RNA polymerase subunit beta</fullName>
        <ecNumber evidence="1">2.7.7.6</ecNumber>
    </recommendedName>
    <alternativeName>
        <fullName evidence="1">PEP</fullName>
    </alternativeName>
    <alternativeName>
        <fullName evidence="1">Plastid-encoded RNA polymerase subunit beta</fullName>
        <shortName evidence="1">RNA polymerase subunit beta</shortName>
    </alternativeName>
</protein>